<keyword id="KW-0067">ATP-binding</keyword>
<keyword id="KW-0436">Ligase</keyword>
<keyword id="KW-0547">Nucleotide-binding</keyword>
<keyword id="KW-0648">Protein biosynthesis</keyword>
<keyword id="KW-1185">Reference proteome</keyword>
<reference key="1">
    <citation type="journal article" date="2005" name="Nucleic Acids Res.">
        <title>Genomic blueprint of Hahella chejuensis, a marine microbe producing an algicidal agent.</title>
        <authorList>
            <person name="Jeong H."/>
            <person name="Yim J.H."/>
            <person name="Lee C."/>
            <person name="Choi S.-H."/>
            <person name="Park Y.K."/>
            <person name="Yoon S.H."/>
            <person name="Hur C.-G."/>
            <person name="Kang H.-Y."/>
            <person name="Kim D."/>
            <person name="Lee H.H."/>
            <person name="Park K.H."/>
            <person name="Park S.-H."/>
            <person name="Park H.-S."/>
            <person name="Lee H.K."/>
            <person name="Oh T.K."/>
            <person name="Kim J.F."/>
        </authorList>
    </citation>
    <scope>NUCLEOTIDE SEQUENCE [LARGE SCALE GENOMIC DNA]</scope>
    <source>
        <strain>KCTC 2396</strain>
    </source>
</reference>
<protein>
    <recommendedName>
        <fullName evidence="1">Aspartyl/glutamyl-tRNA(Asn/Gln) amidotransferase subunit B</fullName>
        <shortName evidence="1">Asp/Glu-ADT subunit B</shortName>
        <ecNumber evidence="1">6.3.5.-</ecNumber>
    </recommendedName>
</protein>
<evidence type="ECO:0000255" key="1">
    <source>
        <dbReference type="HAMAP-Rule" id="MF_00121"/>
    </source>
</evidence>
<name>GATB_HAHCH</name>
<dbReference type="EC" id="6.3.5.-" evidence="1"/>
<dbReference type="EMBL" id="CP000155">
    <property type="protein sequence ID" value="ABC32010.1"/>
    <property type="molecule type" value="Genomic_DNA"/>
</dbReference>
<dbReference type="RefSeq" id="WP_011399074.1">
    <property type="nucleotide sequence ID" value="NC_007645.1"/>
</dbReference>
<dbReference type="SMR" id="Q2SBG4"/>
<dbReference type="STRING" id="349521.HCH_05338"/>
<dbReference type="KEGG" id="hch:HCH_05338"/>
<dbReference type="eggNOG" id="COG0064">
    <property type="taxonomic scope" value="Bacteria"/>
</dbReference>
<dbReference type="HOGENOM" id="CLU_019240_0_0_6"/>
<dbReference type="OrthoDB" id="9804078at2"/>
<dbReference type="Proteomes" id="UP000000238">
    <property type="component" value="Chromosome"/>
</dbReference>
<dbReference type="GO" id="GO:0050566">
    <property type="term" value="F:asparaginyl-tRNA synthase (glutamine-hydrolyzing) activity"/>
    <property type="evidence" value="ECO:0007669"/>
    <property type="project" value="RHEA"/>
</dbReference>
<dbReference type="GO" id="GO:0005524">
    <property type="term" value="F:ATP binding"/>
    <property type="evidence" value="ECO:0007669"/>
    <property type="project" value="UniProtKB-KW"/>
</dbReference>
<dbReference type="GO" id="GO:0050567">
    <property type="term" value="F:glutaminyl-tRNA synthase (glutamine-hydrolyzing) activity"/>
    <property type="evidence" value="ECO:0007669"/>
    <property type="project" value="UniProtKB-UniRule"/>
</dbReference>
<dbReference type="GO" id="GO:0070681">
    <property type="term" value="P:glutaminyl-tRNAGln biosynthesis via transamidation"/>
    <property type="evidence" value="ECO:0007669"/>
    <property type="project" value="TreeGrafter"/>
</dbReference>
<dbReference type="GO" id="GO:0006412">
    <property type="term" value="P:translation"/>
    <property type="evidence" value="ECO:0007669"/>
    <property type="project" value="UniProtKB-UniRule"/>
</dbReference>
<dbReference type="FunFam" id="1.10.10.410:FF:000001">
    <property type="entry name" value="Aspartyl/glutamyl-tRNA(Asn/Gln) amidotransferase subunit B"/>
    <property type="match status" value="1"/>
</dbReference>
<dbReference type="FunFam" id="1.10.150.380:FF:000001">
    <property type="entry name" value="Aspartyl/glutamyl-tRNA(Asn/Gln) amidotransferase subunit B"/>
    <property type="match status" value="1"/>
</dbReference>
<dbReference type="Gene3D" id="1.10.10.410">
    <property type="match status" value="1"/>
</dbReference>
<dbReference type="Gene3D" id="1.10.150.380">
    <property type="entry name" value="GatB domain, N-terminal subdomain"/>
    <property type="match status" value="1"/>
</dbReference>
<dbReference type="HAMAP" id="MF_00121">
    <property type="entry name" value="GatB"/>
    <property type="match status" value="1"/>
</dbReference>
<dbReference type="InterPro" id="IPR017959">
    <property type="entry name" value="Asn/Gln-tRNA_amidoTrfase_suB/E"/>
</dbReference>
<dbReference type="InterPro" id="IPR006075">
    <property type="entry name" value="Asn/Gln-tRNA_Trfase_suB/E_cat"/>
</dbReference>
<dbReference type="InterPro" id="IPR018027">
    <property type="entry name" value="Asn/Gln_amidotransferase"/>
</dbReference>
<dbReference type="InterPro" id="IPR003789">
    <property type="entry name" value="Asn/Gln_tRNA_amidoTrase-B-like"/>
</dbReference>
<dbReference type="InterPro" id="IPR004413">
    <property type="entry name" value="GatB"/>
</dbReference>
<dbReference type="InterPro" id="IPR042114">
    <property type="entry name" value="GatB_C_1"/>
</dbReference>
<dbReference type="InterPro" id="IPR023168">
    <property type="entry name" value="GatB_Yqey_C_2"/>
</dbReference>
<dbReference type="InterPro" id="IPR017958">
    <property type="entry name" value="Gln-tRNA_amidoTrfase_suB_CS"/>
</dbReference>
<dbReference type="InterPro" id="IPR014746">
    <property type="entry name" value="Gln_synth/guanido_kin_cat_dom"/>
</dbReference>
<dbReference type="NCBIfam" id="TIGR00133">
    <property type="entry name" value="gatB"/>
    <property type="match status" value="1"/>
</dbReference>
<dbReference type="NCBIfam" id="NF004012">
    <property type="entry name" value="PRK05477.1-2"/>
    <property type="match status" value="1"/>
</dbReference>
<dbReference type="NCBIfam" id="NF004014">
    <property type="entry name" value="PRK05477.1-4"/>
    <property type="match status" value="1"/>
</dbReference>
<dbReference type="NCBIfam" id="NF004015">
    <property type="entry name" value="PRK05477.1-5"/>
    <property type="match status" value="1"/>
</dbReference>
<dbReference type="PANTHER" id="PTHR11659">
    <property type="entry name" value="GLUTAMYL-TRNA GLN AMIDOTRANSFERASE SUBUNIT B MITOCHONDRIAL AND PROKARYOTIC PET112-RELATED"/>
    <property type="match status" value="1"/>
</dbReference>
<dbReference type="PANTHER" id="PTHR11659:SF0">
    <property type="entry name" value="GLUTAMYL-TRNA(GLN) AMIDOTRANSFERASE SUBUNIT B, MITOCHONDRIAL"/>
    <property type="match status" value="1"/>
</dbReference>
<dbReference type="Pfam" id="PF02934">
    <property type="entry name" value="GatB_N"/>
    <property type="match status" value="1"/>
</dbReference>
<dbReference type="Pfam" id="PF02637">
    <property type="entry name" value="GatB_Yqey"/>
    <property type="match status" value="1"/>
</dbReference>
<dbReference type="SMART" id="SM00845">
    <property type="entry name" value="GatB_Yqey"/>
    <property type="match status" value="1"/>
</dbReference>
<dbReference type="SUPFAM" id="SSF89095">
    <property type="entry name" value="GatB/YqeY motif"/>
    <property type="match status" value="1"/>
</dbReference>
<dbReference type="SUPFAM" id="SSF55931">
    <property type="entry name" value="Glutamine synthetase/guanido kinase"/>
    <property type="match status" value="1"/>
</dbReference>
<dbReference type="PROSITE" id="PS01234">
    <property type="entry name" value="GATB"/>
    <property type="match status" value="1"/>
</dbReference>
<comment type="function">
    <text evidence="1">Allows the formation of correctly charged Asn-tRNA(Asn) or Gln-tRNA(Gln) through the transamidation of misacylated Asp-tRNA(Asn) or Glu-tRNA(Gln) in organisms which lack either or both of asparaginyl-tRNA or glutaminyl-tRNA synthetases. The reaction takes place in the presence of glutamine and ATP through an activated phospho-Asp-tRNA(Asn) or phospho-Glu-tRNA(Gln).</text>
</comment>
<comment type="catalytic activity">
    <reaction evidence="1">
        <text>L-glutamyl-tRNA(Gln) + L-glutamine + ATP + H2O = L-glutaminyl-tRNA(Gln) + L-glutamate + ADP + phosphate + H(+)</text>
        <dbReference type="Rhea" id="RHEA:17521"/>
        <dbReference type="Rhea" id="RHEA-COMP:9681"/>
        <dbReference type="Rhea" id="RHEA-COMP:9684"/>
        <dbReference type="ChEBI" id="CHEBI:15377"/>
        <dbReference type="ChEBI" id="CHEBI:15378"/>
        <dbReference type="ChEBI" id="CHEBI:29985"/>
        <dbReference type="ChEBI" id="CHEBI:30616"/>
        <dbReference type="ChEBI" id="CHEBI:43474"/>
        <dbReference type="ChEBI" id="CHEBI:58359"/>
        <dbReference type="ChEBI" id="CHEBI:78520"/>
        <dbReference type="ChEBI" id="CHEBI:78521"/>
        <dbReference type="ChEBI" id="CHEBI:456216"/>
    </reaction>
</comment>
<comment type="catalytic activity">
    <reaction evidence="1">
        <text>L-aspartyl-tRNA(Asn) + L-glutamine + ATP + H2O = L-asparaginyl-tRNA(Asn) + L-glutamate + ADP + phosphate + 2 H(+)</text>
        <dbReference type="Rhea" id="RHEA:14513"/>
        <dbReference type="Rhea" id="RHEA-COMP:9674"/>
        <dbReference type="Rhea" id="RHEA-COMP:9677"/>
        <dbReference type="ChEBI" id="CHEBI:15377"/>
        <dbReference type="ChEBI" id="CHEBI:15378"/>
        <dbReference type="ChEBI" id="CHEBI:29985"/>
        <dbReference type="ChEBI" id="CHEBI:30616"/>
        <dbReference type="ChEBI" id="CHEBI:43474"/>
        <dbReference type="ChEBI" id="CHEBI:58359"/>
        <dbReference type="ChEBI" id="CHEBI:78515"/>
        <dbReference type="ChEBI" id="CHEBI:78516"/>
        <dbReference type="ChEBI" id="CHEBI:456216"/>
    </reaction>
</comment>
<comment type="subunit">
    <text evidence="1">Heterotrimer of A, B and C subunits.</text>
</comment>
<comment type="similarity">
    <text evidence="1">Belongs to the GatB/GatE family. GatB subfamily.</text>
</comment>
<gene>
    <name evidence="1" type="primary">gatB</name>
    <name type="ordered locus">HCH_05338</name>
</gene>
<sequence>MEWEAVIGLEVHVQLATKSKIFSGAATTFGAEPNTQACAVDLAMPGMLPVMNEEAVRMAVMFGLAIGAEINTRSVFDRKNYFYPDLPKGYQISQLDHPTVKQGKLDIQLENGEKKTITVTRAHLEEDAGKSLHEDFHGMTGIDLNRAGTPLLEIVSEPELRSAKEAVAYLRKLHSIVTYLGISDGDMSQGSMRCDCNVSVRPKGQKEFGVRTEIKNVNSFRFVEKAIQGEIERQIDLIEEGGKVTQETRLYDADKDNTRSMRSKEFANDYRYFPDPDLLPIEIDDAYIEAVRSTLPELPEQKLARFCSEYGLSDYDAGVLASSRAQADYFEAATKIVGDAKLTANWIMGELAKRLNQNSLDISQSPVTAEGLGKLLLRLKDNTINGKAAKDVLEAMWNGEGEADEIIEKKGLIAVTDDSAIEAFVDEVLANNAAQVEQYKAADEAKRGKMIGFFVGQTMKISKGKANPQQVNEILAKKLS</sequence>
<accession>Q2SBG4</accession>
<feature type="chain" id="PRO_0000241229" description="Aspartyl/glutamyl-tRNA(Asn/Gln) amidotransferase subunit B">
    <location>
        <begin position="1"/>
        <end position="480"/>
    </location>
</feature>
<proteinExistence type="inferred from homology"/>
<organism>
    <name type="scientific">Hahella chejuensis (strain KCTC 2396)</name>
    <dbReference type="NCBI Taxonomy" id="349521"/>
    <lineage>
        <taxon>Bacteria</taxon>
        <taxon>Pseudomonadati</taxon>
        <taxon>Pseudomonadota</taxon>
        <taxon>Gammaproteobacteria</taxon>
        <taxon>Oceanospirillales</taxon>
        <taxon>Hahellaceae</taxon>
        <taxon>Hahella</taxon>
    </lineage>
</organism>